<name>LSH6_ARATH</name>
<comment type="function">
    <text evidence="1">Probable transcription regulator that acts as a developmental regulator by promoting cell growth in response to light.</text>
</comment>
<comment type="subcellular location">
    <subcellularLocation>
        <location evidence="1">Nucleus</location>
    </subcellularLocation>
</comment>
<comment type="similarity">
    <text evidence="4">Belongs to the plant homeotic and developmental regulators ALOG protein family.</text>
</comment>
<gene>
    <name type="primary">LSH6</name>
    <name type="synonym">OBO6</name>
    <name type="ordered locus">At1g07090</name>
    <name type="ORF">F10K1.20</name>
</gene>
<accession>Q9LMK2</accession>
<reference key="1">
    <citation type="journal article" date="2000" name="Nature">
        <title>Sequence and analysis of chromosome 1 of the plant Arabidopsis thaliana.</title>
        <authorList>
            <person name="Theologis A."/>
            <person name="Ecker J.R."/>
            <person name="Palm C.J."/>
            <person name="Federspiel N.A."/>
            <person name="Kaul S."/>
            <person name="White O."/>
            <person name="Alonso J."/>
            <person name="Altafi H."/>
            <person name="Araujo R."/>
            <person name="Bowman C.L."/>
            <person name="Brooks S.Y."/>
            <person name="Buehler E."/>
            <person name="Chan A."/>
            <person name="Chao Q."/>
            <person name="Chen H."/>
            <person name="Cheuk R.F."/>
            <person name="Chin C.W."/>
            <person name="Chung M.K."/>
            <person name="Conn L."/>
            <person name="Conway A.B."/>
            <person name="Conway A.R."/>
            <person name="Creasy T.H."/>
            <person name="Dewar K."/>
            <person name="Dunn P."/>
            <person name="Etgu P."/>
            <person name="Feldblyum T.V."/>
            <person name="Feng J.-D."/>
            <person name="Fong B."/>
            <person name="Fujii C.Y."/>
            <person name="Gill J.E."/>
            <person name="Goldsmith A.D."/>
            <person name="Haas B."/>
            <person name="Hansen N.F."/>
            <person name="Hughes B."/>
            <person name="Huizar L."/>
            <person name="Hunter J.L."/>
            <person name="Jenkins J."/>
            <person name="Johnson-Hopson C."/>
            <person name="Khan S."/>
            <person name="Khaykin E."/>
            <person name="Kim C.J."/>
            <person name="Koo H.L."/>
            <person name="Kremenetskaia I."/>
            <person name="Kurtz D.B."/>
            <person name="Kwan A."/>
            <person name="Lam B."/>
            <person name="Langin-Hooper S."/>
            <person name="Lee A."/>
            <person name="Lee J.M."/>
            <person name="Lenz C.A."/>
            <person name="Li J.H."/>
            <person name="Li Y.-P."/>
            <person name="Lin X."/>
            <person name="Liu S.X."/>
            <person name="Liu Z.A."/>
            <person name="Luros J.S."/>
            <person name="Maiti R."/>
            <person name="Marziali A."/>
            <person name="Militscher J."/>
            <person name="Miranda M."/>
            <person name="Nguyen M."/>
            <person name="Nierman W.C."/>
            <person name="Osborne B.I."/>
            <person name="Pai G."/>
            <person name="Peterson J."/>
            <person name="Pham P.K."/>
            <person name="Rizzo M."/>
            <person name="Rooney T."/>
            <person name="Rowley D."/>
            <person name="Sakano H."/>
            <person name="Salzberg S.L."/>
            <person name="Schwartz J.R."/>
            <person name="Shinn P."/>
            <person name="Southwick A.M."/>
            <person name="Sun H."/>
            <person name="Tallon L.J."/>
            <person name="Tambunga G."/>
            <person name="Toriumi M.J."/>
            <person name="Town C.D."/>
            <person name="Utterback T."/>
            <person name="Van Aken S."/>
            <person name="Vaysberg M."/>
            <person name="Vysotskaia V.S."/>
            <person name="Walker M."/>
            <person name="Wu D."/>
            <person name="Yu G."/>
            <person name="Fraser C.M."/>
            <person name="Venter J.C."/>
            <person name="Davis R.W."/>
        </authorList>
    </citation>
    <scope>NUCLEOTIDE SEQUENCE [LARGE SCALE GENOMIC DNA]</scope>
    <source>
        <strain>cv. Columbia</strain>
    </source>
</reference>
<reference key="2">
    <citation type="journal article" date="2017" name="Plant J.">
        <title>Araport11: a complete reannotation of the Arabidopsis thaliana reference genome.</title>
        <authorList>
            <person name="Cheng C.Y."/>
            <person name="Krishnakumar V."/>
            <person name="Chan A.P."/>
            <person name="Thibaud-Nissen F."/>
            <person name="Schobel S."/>
            <person name="Town C.D."/>
        </authorList>
    </citation>
    <scope>GENOME REANNOTATION</scope>
    <source>
        <strain>cv. Columbia</strain>
    </source>
</reference>
<reference key="3">
    <citation type="journal article" date="2003" name="Science">
        <title>Empirical analysis of transcriptional activity in the Arabidopsis genome.</title>
        <authorList>
            <person name="Yamada K."/>
            <person name="Lim J."/>
            <person name="Dale J.M."/>
            <person name="Chen H."/>
            <person name="Shinn P."/>
            <person name="Palm C.J."/>
            <person name="Southwick A.M."/>
            <person name="Wu H.C."/>
            <person name="Kim C.J."/>
            <person name="Nguyen M."/>
            <person name="Pham P.K."/>
            <person name="Cheuk R.F."/>
            <person name="Karlin-Newmann G."/>
            <person name="Liu S.X."/>
            <person name="Lam B."/>
            <person name="Sakano H."/>
            <person name="Wu T."/>
            <person name="Yu G."/>
            <person name="Miranda M."/>
            <person name="Quach H.L."/>
            <person name="Tripp M."/>
            <person name="Chang C.H."/>
            <person name="Lee J.M."/>
            <person name="Toriumi M.J."/>
            <person name="Chan M.M."/>
            <person name="Tang C.C."/>
            <person name="Onodera C.S."/>
            <person name="Deng J.M."/>
            <person name="Akiyama K."/>
            <person name="Ansari Y."/>
            <person name="Arakawa T."/>
            <person name="Banh J."/>
            <person name="Banno F."/>
            <person name="Bowser L."/>
            <person name="Brooks S.Y."/>
            <person name="Carninci P."/>
            <person name="Chao Q."/>
            <person name="Choy N."/>
            <person name="Enju A."/>
            <person name="Goldsmith A.D."/>
            <person name="Gurjal M."/>
            <person name="Hansen N.F."/>
            <person name="Hayashizaki Y."/>
            <person name="Johnson-Hopson C."/>
            <person name="Hsuan V.W."/>
            <person name="Iida K."/>
            <person name="Karnes M."/>
            <person name="Khan S."/>
            <person name="Koesema E."/>
            <person name="Ishida J."/>
            <person name="Jiang P.X."/>
            <person name="Jones T."/>
            <person name="Kawai J."/>
            <person name="Kamiya A."/>
            <person name="Meyers C."/>
            <person name="Nakajima M."/>
            <person name="Narusaka M."/>
            <person name="Seki M."/>
            <person name="Sakurai T."/>
            <person name="Satou M."/>
            <person name="Tamse R."/>
            <person name="Vaysberg M."/>
            <person name="Wallender E.K."/>
            <person name="Wong C."/>
            <person name="Yamamura Y."/>
            <person name="Yuan S."/>
            <person name="Shinozaki K."/>
            <person name="Davis R.W."/>
            <person name="Theologis A."/>
            <person name="Ecker J.R."/>
        </authorList>
    </citation>
    <scope>NUCLEOTIDE SEQUENCE [LARGE SCALE MRNA]</scope>
    <source>
        <strain>cv. Columbia</strain>
    </source>
</reference>
<reference key="4">
    <citation type="submission" date="2002-03" db="EMBL/GenBank/DDBJ databases">
        <title>Full-length cDNA from Arabidopsis thaliana.</title>
        <authorList>
            <person name="Brover V.V."/>
            <person name="Troukhan M.E."/>
            <person name="Alexandrov N.A."/>
            <person name="Lu Y.-P."/>
            <person name="Flavell R.B."/>
            <person name="Feldmann K.A."/>
        </authorList>
    </citation>
    <scope>NUCLEOTIDE SEQUENCE [LARGE SCALE MRNA]</scope>
</reference>
<reference key="5">
    <citation type="submission" date="2004-12" db="EMBL/GenBank/DDBJ databases">
        <title>Arabidopsis ORF clones.</title>
        <authorList>
            <person name="Cheuk R.F."/>
            <person name="Chen H."/>
            <person name="Kim C.J."/>
            <person name="Shinn P."/>
            <person name="Ecker J.R."/>
        </authorList>
    </citation>
    <scope>NUCLEOTIDE SEQUENCE [LARGE SCALE MRNA]</scope>
    <source>
        <strain>cv. Columbia</strain>
    </source>
</reference>
<reference key="6">
    <citation type="journal article" date="2004" name="Plant J.">
        <title>Overexpression of LSH1, a member of an uncharacterised gene family, causes enhanced light regulation of seedling development.</title>
        <authorList>
            <person name="Zhao L."/>
            <person name="Nakazawa M."/>
            <person name="Takase T."/>
            <person name="Manabe K."/>
            <person name="Kobayashi M."/>
            <person name="Seki M."/>
            <person name="Shinozaki K."/>
            <person name="Matsui M."/>
        </authorList>
    </citation>
    <scope>GENE FAMILY</scope>
    <scope>NOMENCLATURE</scope>
    <source>
        <strain>cv. Columbia</strain>
    </source>
</reference>
<reference key="7">
    <citation type="journal article" date="2011" name="Proc. Natl. Acad. Sci. U.S.A.">
        <title>Organ boundary1 defines a gene expressed at the junction between the shoot apical meristem and lateral organs.</title>
        <authorList>
            <person name="Cho E."/>
            <person name="Zambryski P.C."/>
        </authorList>
    </citation>
    <scope>GENE FAMILY</scope>
</reference>
<reference key="8">
    <citation type="journal article" date="2012" name="Biol. Direct">
        <title>ALOG domains: provenance of plant homeotic and developmental regulators from the DNA-binding domain of a novel class of DIRS1-type retroposons.</title>
        <authorList>
            <person name="Iyer L.M."/>
            <person name="Aravind L."/>
        </authorList>
    </citation>
    <scope>DNA-BINDING</scope>
    <scope>GENE FAMILY</scope>
</reference>
<evidence type="ECO:0000250" key="1"/>
<evidence type="ECO:0000255" key="2">
    <source>
        <dbReference type="PROSITE-ProRule" id="PRU01033"/>
    </source>
</evidence>
<evidence type="ECO:0000256" key="3">
    <source>
        <dbReference type="SAM" id="MobiDB-lite"/>
    </source>
</evidence>
<evidence type="ECO:0000305" key="4"/>
<proteinExistence type="evidence at protein level"/>
<sequence>MESADSGRSDPVKGDDPGPSFVSSPPATPSRYESQKRRDWNTFLQYLKNHKPPLALSRCSGAHVIEFLKYLDQFGKTKVHVAACPYFGHQQPPSPCSCPLKQAWGSLDALIGRLRAAYEENGGRPDSNPFAARAVRIYLREVRESQAKARGIPYEKKKRKRPPTVTTVRVDVASSRQSDGDPCNVGAPSVAEAVPP</sequence>
<dbReference type="EMBL" id="AC067971">
    <property type="protein sequence ID" value="AAF82211.1"/>
    <property type="molecule type" value="Genomic_DNA"/>
</dbReference>
<dbReference type="EMBL" id="CP002684">
    <property type="protein sequence ID" value="AEE28076.1"/>
    <property type="molecule type" value="Genomic_DNA"/>
</dbReference>
<dbReference type="EMBL" id="BT003842">
    <property type="protein sequence ID" value="AAO41893.1"/>
    <property type="molecule type" value="mRNA"/>
</dbReference>
<dbReference type="EMBL" id="AY086869">
    <property type="protein sequence ID" value="AAM63916.1"/>
    <property type="molecule type" value="mRNA"/>
</dbReference>
<dbReference type="EMBL" id="BT020303">
    <property type="protein sequence ID" value="AAV84524.1"/>
    <property type="molecule type" value="mRNA"/>
</dbReference>
<dbReference type="EMBL" id="BT024584">
    <property type="protein sequence ID" value="ABD42982.1"/>
    <property type="molecule type" value="mRNA"/>
</dbReference>
<dbReference type="PIR" id="G86205">
    <property type="entry name" value="G86205"/>
</dbReference>
<dbReference type="RefSeq" id="NP_563780.1">
    <property type="nucleotide sequence ID" value="NM_100583.2"/>
</dbReference>
<dbReference type="SMR" id="Q9LMK2"/>
<dbReference type="FunCoup" id="Q9LMK2">
    <property type="interactions" value="7"/>
</dbReference>
<dbReference type="STRING" id="3702.Q9LMK2"/>
<dbReference type="GlyGen" id="Q9LMK2">
    <property type="glycosylation" value="1 site"/>
</dbReference>
<dbReference type="iPTMnet" id="Q9LMK2"/>
<dbReference type="PaxDb" id="3702-AT1G07090.1"/>
<dbReference type="ProteomicsDB" id="238781"/>
<dbReference type="EnsemblPlants" id="AT1G07090.1">
    <property type="protein sequence ID" value="AT1G07090.1"/>
    <property type="gene ID" value="AT1G07090"/>
</dbReference>
<dbReference type="GeneID" id="837220"/>
<dbReference type="Gramene" id="AT1G07090.1">
    <property type="protein sequence ID" value="AT1G07090.1"/>
    <property type="gene ID" value="AT1G07090"/>
</dbReference>
<dbReference type="KEGG" id="ath:AT1G07090"/>
<dbReference type="Araport" id="AT1G07090"/>
<dbReference type="TAIR" id="AT1G07090">
    <property type="gene designation" value="LSH6"/>
</dbReference>
<dbReference type="eggNOG" id="ENOG502QPZE">
    <property type="taxonomic scope" value="Eukaryota"/>
</dbReference>
<dbReference type="HOGENOM" id="CLU_071168_1_0_1"/>
<dbReference type="InParanoid" id="Q9LMK2"/>
<dbReference type="OMA" id="PYFGHAN"/>
<dbReference type="OrthoDB" id="1906822at2759"/>
<dbReference type="PhylomeDB" id="Q9LMK2"/>
<dbReference type="PRO" id="PR:Q9LMK2"/>
<dbReference type="Proteomes" id="UP000006548">
    <property type="component" value="Chromosome 1"/>
</dbReference>
<dbReference type="ExpressionAtlas" id="Q9LMK2">
    <property type="expression patterns" value="baseline and differential"/>
</dbReference>
<dbReference type="GO" id="GO:0005634">
    <property type="term" value="C:nucleus"/>
    <property type="evidence" value="ECO:0000250"/>
    <property type="project" value="UniProtKB"/>
</dbReference>
<dbReference type="GO" id="GO:0003677">
    <property type="term" value="F:DNA binding"/>
    <property type="evidence" value="ECO:0007669"/>
    <property type="project" value="UniProtKB-KW"/>
</dbReference>
<dbReference type="GO" id="GO:0009299">
    <property type="term" value="P:mRNA transcription"/>
    <property type="evidence" value="ECO:0000250"/>
    <property type="project" value="UniProtKB"/>
</dbReference>
<dbReference type="GO" id="GO:0090698">
    <property type="term" value="P:post-embryonic plant morphogenesis"/>
    <property type="evidence" value="ECO:0000250"/>
    <property type="project" value="UniProtKB"/>
</dbReference>
<dbReference type="InterPro" id="IPR040222">
    <property type="entry name" value="ALOG"/>
</dbReference>
<dbReference type="InterPro" id="IPR006936">
    <property type="entry name" value="ALOG_dom"/>
</dbReference>
<dbReference type="PANTHER" id="PTHR31165">
    <property type="entry name" value="PROTEIN G1-LIKE2"/>
    <property type="match status" value="1"/>
</dbReference>
<dbReference type="PANTHER" id="PTHR31165:SF59">
    <property type="entry name" value="PROTEIN LIGHT-DEPENDENT SHORT HYPOCOTYLS 6"/>
    <property type="match status" value="1"/>
</dbReference>
<dbReference type="Pfam" id="PF04852">
    <property type="entry name" value="ALOG_dom"/>
    <property type="match status" value="1"/>
</dbReference>
<dbReference type="PROSITE" id="PS51697">
    <property type="entry name" value="ALOG"/>
    <property type="match status" value="1"/>
</dbReference>
<protein>
    <recommendedName>
        <fullName>Protein LIGHT-DEPENDENT SHORT HYPOCOTYLS 6</fullName>
    </recommendedName>
    <alternativeName>
        <fullName>Protein ORGAN BOUNDARY 6</fullName>
    </alternativeName>
</protein>
<keyword id="KW-0217">Developmental protein</keyword>
<keyword id="KW-0238">DNA-binding</keyword>
<keyword id="KW-0539">Nucleus</keyword>
<keyword id="KW-1185">Reference proteome</keyword>
<keyword id="KW-0804">Transcription</keyword>
<keyword id="KW-0805">Transcription regulation</keyword>
<feature type="chain" id="PRO_0000425293" description="Protein LIGHT-DEPENDENT SHORT HYPOCOTYLS 6">
    <location>
        <begin position="1"/>
        <end position="196"/>
    </location>
</feature>
<feature type="domain" description="ALOG" evidence="2">
    <location>
        <begin position="31"/>
        <end position="158"/>
    </location>
</feature>
<feature type="region of interest" description="Disordered" evidence="3">
    <location>
        <begin position="1"/>
        <end position="36"/>
    </location>
</feature>
<feature type="region of interest" description="Disordered" evidence="3">
    <location>
        <begin position="149"/>
        <end position="196"/>
    </location>
</feature>
<feature type="short sequence motif" description="Nuclear localization signal" evidence="1">
    <location>
        <begin position="156"/>
        <end position="160"/>
    </location>
</feature>
<feature type="compositionally biased region" description="Basic and acidic residues" evidence="3">
    <location>
        <begin position="1"/>
        <end position="16"/>
    </location>
</feature>
<organism>
    <name type="scientific">Arabidopsis thaliana</name>
    <name type="common">Mouse-ear cress</name>
    <dbReference type="NCBI Taxonomy" id="3702"/>
    <lineage>
        <taxon>Eukaryota</taxon>
        <taxon>Viridiplantae</taxon>
        <taxon>Streptophyta</taxon>
        <taxon>Embryophyta</taxon>
        <taxon>Tracheophyta</taxon>
        <taxon>Spermatophyta</taxon>
        <taxon>Magnoliopsida</taxon>
        <taxon>eudicotyledons</taxon>
        <taxon>Gunneridae</taxon>
        <taxon>Pentapetalae</taxon>
        <taxon>rosids</taxon>
        <taxon>malvids</taxon>
        <taxon>Brassicales</taxon>
        <taxon>Brassicaceae</taxon>
        <taxon>Camelineae</taxon>
        <taxon>Arabidopsis</taxon>
    </lineage>
</organism>